<protein>
    <recommendedName>
        <fullName evidence="1">Urocanate hydratase</fullName>
        <shortName evidence="1">Urocanase</shortName>
        <ecNumber evidence="1">4.2.1.49</ecNumber>
    </recommendedName>
    <alternativeName>
        <fullName evidence="1">Imidazolonepropionate hydrolase</fullName>
    </alternativeName>
</protein>
<dbReference type="EC" id="4.2.1.49" evidence="1"/>
<dbReference type="EMBL" id="CP000697">
    <property type="protein sequence ID" value="ABQ30953.1"/>
    <property type="molecule type" value="Genomic_DNA"/>
</dbReference>
<dbReference type="RefSeq" id="WP_011942463.1">
    <property type="nucleotide sequence ID" value="NC_009484.1"/>
</dbReference>
<dbReference type="SMR" id="A5FZC1"/>
<dbReference type="STRING" id="349163.Acry_1749"/>
<dbReference type="KEGG" id="acr:Acry_1749"/>
<dbReference type="eggNOG" id="COG2987">
    <property type="taxonomic scope" value="Bacteria"/>
</dbReference>
<dbReference type="HOGENOM" id="CLU_018868_0_1_5"/>
<dbReference type="UniPathway" id="UPA00379">
    <property type="reaction ID" value="UER00550"/>
</dbReference>
<dbReference type="Proteomes" id="UP000000245">
    <property type="component" value="Chromosome"/>
</dbReference>
<dbReference type="GO" id="GO:0005737">
    <property type="term" value="C:cytoplasm"/>
    <property type="evidence" value="ECO:0007669"/>
    <property type="project" value="UniProtKB-SubCell"/>
</dbReference>
<dbReference type="GO" id="GO:0016153">
    <property type="term" value="F:urocanate hydratase activity"/>
    <property type="evidence" value="ECO:0007669"/>
    <property type="project" value="UniProtKB-UniRule"/>
</dbReference>
<dbReference type="GO" id="GO:0019556">
    <property type="term" value="P:L-histidine catabolic process to glutamate and formamide"/>
    <property type="evidence" value="ECO:0007669"/>
    <property type="project" value="UniProtKB-UniPathway"/>
</dbReference>
<dbReference type="GO" id="GO:0019557">
    <property type="term" value="P:L-histidine catabolic process to glutamate and formate"/>
    <property type="evidence" value="ECO:0007669"/>
    <property type="project" value="UniProtKB-UniPathway"/>
</dbReference>
<dbReference type="FunFam" id="3.40.50.10730:FF:000001">
    <property type="entry name" value="Urocanate hydratase"/>
    <property type="match status" value="1"/>
</dbReference>
<dbReference type="Gene3D" id="3.40.50.10730">
    <property type="entry name" value="Urocanase like domains"/>
    <property type="match status" value="1"/>
</dbReference>
<dbReference type="Gene3D" id="3.40.1770.10">
    <property type="entry name" value="Urocanase superfamily"/>
    <property type="match status" value="1"/>
</dbReference>
<dbReference type="HAMAP" id="MF_00577">
    <property type="entry name" value="HutU"/>
    <property type="match status" value="1"/>
</dbReference>
<dbReference type="InterPro" id="IPR055351">
    <property type="entry name" value="Urocanase"/>
</dbReference>
<dbReference type="InterPro" id="IPR023637">
    <property type="entry name" value="Urocanase-like"/>
</dbReference>
<dbReference type="InterPro" id="IPR035401">
    <property type="entry name" value="Urocanase_C"/>
</dbReference>
<dbReference type="InterPro" id="IPR038364">
    <property type="entry name" value="Urocanase_central_sf"/>
</dbReference>
<dbReference type="InterPro" id="IPR023636">
    <property type="entry name" value="Urocanase_CS"/>
</dbReference>
<dbReference type="InterPro" id="IPR035400">
    <property type="entry name" value="Urocanase_N"/>
</dbReference>
<dbReference type="InterPro" id="IPR035085">
    <property type="entry name" value="Urocanase_Rossmann-like"/>
</dbReference>
<dbReference type="InterPro" id="IPR036190">
    <property type="entry name" value="Urocanase_sf"/>
</dbReference>
<dbReference type="NCBIfam" id="TIGR01228">
    <property type="entry name" value="hutU"/>
    <property type="match status" value="1"/>
</dbReference>
<dbReference type="NCBIfam" id="NF003820">
    <property type="entry name" value="PRK05414.1"/>
    <property type="match status" value="1"/>
</dbReference>
<dbReference type="PANTHER" id="PTHR12216">
    <property type="entry name" value="UROCANATE HYDRATASE"/>
    <property type="match status" value="1"/>
</dbReference>
<dbReference type="PANTHER" id="PTHR12216:SF4">
    <property type="entry name" value="UROCANATE HYDRATASE"/>
    <property type="match status" value="1"/>
</dbReference>
<dbReference type="Pfam" id="PF01175">
    <property type="entry name" value="Urocanase"/>
    <property type="match status" value="1"/>
</dbReference>
<dbReference type="Pfam" id="PF17392">
    <property type="entry name" value="Urocanase_C"/>
    <property type="match status" value="1"/>
</dbReference>
<dbReference type="Pfam" id="PF17391">
    <property type="entry name" value="Urocanase_N"/>
    <property type="match status" value="1"/>
</dbReference>
<dbReference type="PIRSF" id="PIRSF001423">
    <property type="entry name" value="Urocanate_hydrat"/>
    <property type="match status" value="1"/>
</dbReference>
<dbReference type="SUPFAM" id="SSF111326">
    <property type="entry name" value="Urocanase"/>
    <property type="match status" value="1"/>
</dbReference>
<dbReference type="PROSITE" id="PS01233">
    <property type="entry name" value="UROCANASE"/>
    <property type="match status" value="1"/>
</dbReference>
<sequence>MNRRLDNARTIRAPHGSDLSARSWLTEAPLRMLMNNLDPDVAERPEELVVYGGIGRAARDWESFDRILGALRDLGPEETLLVQSGKPVGVFRTHADAPRVLIANSNLVPNWANWQHFHELDRKGLMMYGQMTAGSWIYIGSQGIVQGTYETFVEAGRQHYGGDLAGRWILTGGLGGMGGAQPLAATMAGASMIAVECTPSRIEMRLRTRYLDRRADTLDEALAMLEAAKRDGKPVSIGLLGNAAEVFPELVRRGIRPDIVTDQTSAHDPVNGYLPAGWTLEHWAAMRERDPEAVALAAKRSMAGQVRAMLDFWRMGIPVLDYGNNIRAMAQEMGVADAFDFPGFVPAYIRPLFCRGIGPFRWAALSGDPEDIYRTDAKVKELIPDDPHLHHWLDMAREWIAFQGLPARICWVGLGQRHRLGLAFNEMVARGELSAPVVIGRDHLDSGSVASPNRETEAMRDGSDAVSDWPLLNALLNCASGATWVSLHHGGGVGMGYSQHAGMVIVADGTEAAAKRLERVLWNDPATGVMRHADAGYDIAIDCARENGLNLPGITG</sequence>
<proteinExistence type="inferred from homology"/>
<reference key="1">
    <citation type="submission" date="2007-05" db="EMBL/GenBank/DDBJ databases">
        <title>Complete sequence of chromosome of Acidiphilium cryptum JF-5.</title>
        <authorList>
            <consortium name="US DOE Joint Genome Institute"/>
            <person name="Copeland A."/>
            <person name="Lucas S."/>
            <person name="Lapidus A."/>
            <person name="Barry K."/>
            <person name="Detter J.C."/>
            <person name="Glavina del Rio T."/>
            <person name="Hammon N."/>
            <person name="Israni S."/>
            <person name="Dalin E."/>
            <person name="Tice H."/>
            <person name="Pitluck S."/>
            <person name="Sims D."/>
            <person name="Brettin T."/>
            <person name="Bruce D."/>
            <person name="Han C."/>
            <person name="Schmutz J."/>
            <person name="Larimer F."/>
            <person name="Land M."/>
            <person name="Hauser L."/>
            <person name="Kyrpides N."/>
            <person name="Kim E."/>
            <person name="Magnuson T."/>
            <person name="Richardson P."/>
        </authorList>
    </citation>
    <scope>NUCLEOTIDE SEQUENCE [LARGE SCALE GENOMIC DNA]</scope>
    <source>
        <strain>JF-5</strain>
    </source>
</reference>
<feature type="chain" id="PRO_1000025114" description="Urocanate hydratase">
    <location>
        <begin position="1"/>
        <end position="556"/>
    </location>
</feature>
<feature type="active site" evidence="1">
    <location>
        <position position="410"/>
    </location>
</feature>
<feature type="binding site" evidence="1">
    <location>
        <begin position="52"/>
        <end position="53"/>
    </location>
    <ligand>
        <name>NAD(+)</name>
        <dbReference type="ChEBI" id="CHEBI:57540"/>
    </ligand>
</feature>
<feature type="binding site" evidence="1">
    <location>
        <position position="130"/>
    </location>
    <ligand>
        <name>NAD(+)</name>
        <dbReference type="ChEBI" id="CHEBI:57540"/>
    </ligand>
</feature>
<feature type="binding site" evidence="1">
    <location>
        <begin position="176"/>
        <end position="178"/>
    </location>
    <ligand>
        <name>NAD(+)</name>
        <dbReference type="ChEBI" id="CHEBI:57540"/>
    </ligand>
</feature>
<feature type="binding site" evidence="1">
    <location>
        <position position="196"/>
    </location>
    <ligand>
        <name>NAD(+)</name>
        <dbReference type="ChEBI" id="CHEBI:57540"/>
    </ligand>
</feature>
<feature type="binding site" evidence="1">
    <location>
        <position position="201"/>
    </location>
    <ligand>
        <name>NAD(+)</name>
        <dbReference type="ChEBI" id="CHEBI:57540"/>
    </ligand>
</feature>
<feature type="binding site" evidence="1">
    <location>
        <begin position="242"/>
        <end position="243"/>
    </location>
    <ligand>
        <name>NAD(+)</name>
        <dbReference type="ChEBI" id="CHEBI:57540"/>
    </ligand>
</feature>
<feature type="binding site" evidence="1">
    <location>
        <begin position="263"/>
        <end position="267"/>
    </location>
    <ligand>
        <name>NAD(+)</name>
        <dbReference type="ChEBI" id="CHEBI:57540"/>
    </ligand>
</feature>
<feature type="binding site" evidence="1">
    <location>
        <begin position="273"/>
        <end position="274"/>
    </location>
    <ligand>
        <name>NAD(+)</name>
        <dbReference type="ChEBI" id="CHEBI:57540"/>
    </ligand>
</feature>
<feature type="binding site" evidence="1">
    <location>
        <position position="322"/>
    </location>
    <ligand>
        <name>NAD(+)</name>
        <dbReference type="ChEBI" id="CHEBI:57540"/>
    </ligand>
</feature>
<feature type="binding site" evidence="1">
    <location>
        <position position="492"/>
    </location>
    <ligand>
        <name>NAD(+)</name>
        <dbReference type="ChEBI" id="CHEBI:57540"/>
    </ligand>
</feature>
<comment type="function">
    <text evidence="1">Catalyzes the conversion of urocanate to 4-imidazolone-5-propionate.</text>
</comment>
<comment type="catalytic activity">
    <reaction evidence="1">
        <text>4-imidazolone-5-propanoate = trans-urocanate + H2O</text>
        <dbReference type="Rhea" id="RHEA:13101"/>
        <dbReference type="ChEBI" id="CHEBI:15377"/>
        <dbReference type="ChEBI" id="CHEBI:17771"/>
        <dbReference type="ChEBI" id="CHEBI:77893"/>
        <dbReference type="EC" id="4.2.1.49"/>
    </reaction>
</comment>
<comment type="cofactor">
    <cofactor evidence="1">
        <name>NAD(+)</name>
        <dbReference type="ChEBI" id="CHEBI:57540"/>
    </cofactor>
    <text evidence="1">Binds 1 NAD(+) per subunit.</text>
</comment>
<comment type="pathway">
    <text evidence="1">Amino-acid degradation; L-histidine degradation into L-glutamate; N-formimidoyl-L-glutamate from L-histidine: step 2/3.</text>
</comment>
<comment type="subcellular location">
    <subcellularLocation>
        <location evidence="1">Cytoplasm</location>
    </subcellularLocation>
</comment>
<comment type="similarity">
    <text evidence="1">Belongs to the urocanase family.</text>
</comment>
<gene>
    <name evidence="1" type="primary">hutU</name>
    <name type="ordered locus">Acry_1749</name>
</gene>
<evidence type="ECO:0000255" key="1">
    <source>
        <dbReference type="HAMAP-Rule" id="MF_00577"/>
    </source>
</evidence>
<accession>A5FZC1</accession>
<name>HUTU_ACICJ</name>
<organism>
    <name type="scientific">Acidiphilium cryptum (strain JF-5)</name>
    <dbReference type="NCBI Taxonomy" id="349163"/>
    <lineage>
        <taxon>Bacteria</taxon>
        <taxon>Pseudomonadati</taxon>
        <taxon>Pseudomonadota</taxon>
        <taxon>Alphaproteobacteria</taxon>
        <taxon>Acetobacterales</taxon>
        <taxon>Acidocellaceae</taxon>
        <taxon>Acidiphilium</taxon>
    </lineage>
</organism>
<keyword id="KW-0963">Cytoplasm</keyword>
<keyword id="KW-0369">Histidine metabolism</keyword>
<keyword id="KW-0456">Lyase</keyword>
<keyword id="KW-0520">NAD</keyword>
<keyword id="KW-1185">Reference proteome</keyword>